<gene>
    <name evidence="1" type="primary">dapB</name>
    <name type="ordered locus">LMOf2365_1936</name>
</gene>
<dbReference type="EC" id="1.17.1.8" evidence="1"/>
<dbReference type="EMBL" id="AE017262">
    <property type="protein sequence ID" value="AAT04706.1"/>
    <property type="molecule type" value="Genomic_DNA"/>
</dbReference>
<dbReference type="RefSeq" id="WP_003726314.1">
    <property type="nucleotide sequence ID" value="NC_002973.6"/>
</dbReference>
<dbReference type="SMR" id="Q71YA8"/>
<dbReference type="KEGG" id="lmf:LMOf2365_1936"/>
<dbReference type="HOGENOM" id="CLU_047479_0_1_9"/>
<dbReference type="UniPathway" id="UPA00034">
    <property type="reaction ID" value="UER00018"/>
</dbReference>
<dbReference type="GO" id="GO:0005829">
    <property type="term" value="C:cytosol"/>
    <property type="evidence" value="ECO:0007669"/>
    <property type="project" value="TreeGrafter"/>
</dbReference>
<dbReference type="GO" id="GO:0008839">
    <property type="term" value="F:4-hydroxy-tetrahydrodipicolinate reductase"/>
    <property type="evidence" value="ECO:0007669"/>
    <property type="project" value="UniProtKB-EC"/>
</dbReference>
<dbReference type="GO" id="GO:0051287">
    <property type="term" value="F:NAD binding"/>
    <property type="evidence" value="ECO:0007669"/>
    <property type="project" value="UniProtKB-UniRule"/>
</dbReference>
<dbReference type="GO" id="GO:0050661">
    <property type="term" value="F:NADP binding"/>
    <property type="evidence" value="ECO:0007669"/>
    <property type="project" value="UniProtKB-UniRule"/>
</dbReference>
<dbReference type="GO" id="GO:0016726">
    <property type="term" value="F:oxidoreductase activity, acting on CH or CH2 groups, NAD or NADP as acceptor"/>
    <property type="evidence" value="ECO:0007669"/>
    <property type="project" value="UniProtKB-UniRule"/>
</dbReference>
<dbReference type="GO" id="GO:0019877">
    <property type="term" value="P:diaminopimelate biosynthetic process"/>
    <property type="evidence" value="ECO:0007669"/>
    <property type="project" value="UniProtKB-UniRule"/>
</dbReference>
<dbReference type="GO" id="GO:0009089">
    <property type="term" value="P:lysine biosynthetic process via diaminopimelate"/>
    <property type="evidence" value="ECO:0007669"/>
    <property type="project" value="UniProtKB-UniRule"/>
</dbReference>
<dbReference type="CDD" id="cd02274">
    <property type="entry name" value="DHDPR_N"/>
    <property type="match status" value="1"/>
</dbReference>
<dbReference type="FunFam" id="3.30.360.10:FF:000009">
    <property type="entry name" value="4-hydroxy-tetrahydrodipicolinate reductase"/>
    <property type="match status" value="1"/>
</dbReference>
<dbReference type="Gene3D" id="3.30.360.10">
    <property type="entry name" value="Dihydrodipicolinate Reductase, domain 2"/>
    <property type="match status" value="1"/>
</dbReference>
<dbReference type="Gene3D" id="3.40.50.720">
    <property type="entry name" value="NAD(P)-binding Rossmann-like Domain"/>
    <property type="match status" value="1"/>
</dbReference>
<dbReference type="HAMAP" id="MF_00102">
    <property type="entry name" value="DapB"/>
    <property type="match status" value="1"/>
</dbReference>
<dbReference type="InterPro" id="IPR022663">
    <property type="entry name" value="DapB_C"/>
</dbReference>
<dbReference type="InterPro" id="IPR000846">
    <property type="entry name" value="DapB_N"/>
</dbReference>
<dbReference type="InterPro" id="IPR022664">
    <property type="entry name" value="DapB_N_CS"/>
</dbReference>
<dbReference type="InterPro" id="IPR023940">
    <property type="entry name" value="DHDPR_bac"/>
</dbReference>
<dbReference type="InterPro" id="IPR036291">
    <property type="entry name" value="NAD(P)-bd_dom_sf"/>
</dbReference>
<dbReference type="NCBIfam" id="TIGR00036">
    <property type="entry name" value="dapB"/>
    <property type="match status" value="1"/>
</dbReference>
<dbReference type="PANTHER" id="PTHR20836:SF0">
    <property type="entry name" value="4-HYDROXY-TETRAHYDRODIPICOLINATE REDUCTASE 1, CHLOROPLASTIC-RELATED"/>
    <property type="match status" value="1"/>
</dbReference>
<dbReference type="PANTHER" id="PTHR20836">
    <property type="entry name" value="DIHYDRODIPICOLINATE REDUCTASE"/>
    <property type="match status" value="1"/>
</dbReference>
<dbReference type="Pfam" id="PF05173">
    <property type="entry name" value="DapB_C"/>
    <property type="match status" value="1"/>
</dbReference>
<dbReference type="Pfam" id="PF01113">
    <property type="entry name" value="DapB_N"/>
    <property type="match status" value="1"/>
</dbReference>
<dbReference type="PIRSF" id="PIRSF000161">
    <property type="entry name" value="DHPR"/>
    <property type="match status" value="1"/>
</dbReference>
<dbReference type="SUPFAM" id="SSF55347">
    <property type="entry name" value="Glyceraldehyde-3-phosphate dehydrogenase-like, C-terminal domain"/>
    <property type="match status" value="1"/>
</dbReference>
<dbReference type="SUPFAM" id="SSF51735">
    <property type="entry name" value="NAD(P)-binding Rossmann-fold domains"/>
    <property type="match status" value="1"/>
</dbReference>
<dbReference type="PROSITE" id="PS01298">
    <property type="entry name" value="DAPB"/>
    <property type="match status" value="1"/>
</dbReference>
<comment type="function">
    <text evidence="1">Catalyzes the conversion of 4-hydroxy-tetrahydrodipicolinate (HTPA) to tetrahydrodipicolinate.</text>
</comment>
<comment type="catalytic activity">
    <reaction evidence="1">
        <text>(S)-2,3,4,5-tetrahydrodipicolinate + NAD(+) + H2O = (2S,4S)-4-hydroxy-2,3,4,5-tetrahydrodipicolinate + NADH + H(+)</text>
        <dbReference type="Rhea" id="RHEA:35323"/>
        <dbReference type="ChEBI" id="CHEBI:15377"/>
        <dbReference type="ChEBI" id="CHEBI:15378"/>
        <dbReference type="ChEBI" id="CHEBI:16845"/>
        <dbReference type="ChEBI" id="CHEBI:57540"/>
        <dbReference type="ChEBI" id="CHEBI:57945"/>
        <dbReference type="ChEBI" id="CHEBI:67139"/>
        <dbReference type="EC" id="1.17.1.8"/>
    </reaction>
</comment>
<comment type="catalytic activity">
    <reaction evidence="1">
        <text>(S)-2,3,4,5-tetrahydrodipicolinate + NADP(+) + H2O = (2S,4S)-4-hydroxy-2,3,4,5-tetrahydrodipicolinate + NADPH + H(+)</text>
        <dbReference type="Rhea" id="RHEA:35331"/>
        <dbReference type="ChEBI" id="CHEBI:15377"/>
        <dbReference type="ChEBI" id="CHEBI:15378"/>
        <dbReference type="ChEBI" id="CHEBI:16845"/>
        <dbReference type="ChEBI" id="CHEBI:57783"/>
        <dbReference type="ChEBI" id="CHEBI:58349"/>
        <dbReference type="ChEBI" id="CHEBI:67139"/>
        <dbReference type="EC" id="1.17.1.8"/>
    </reaction>
</comment>
<comment type="pathway">
    <text evidence="1">Amino-acid biosynthesis; L-lysine biosynthesis via DAP pathway; (S)-tetrahydrodipicolinate from L-aspartate: step 4/4.</text>
</comment>
<comment type="subcellular location">
    <subcellularLocation>
        <location evidence="1">Cytoplasm</location>
    </subcellularLocation>
</comment>
<comment type="similarity">
    <text evidence="1">Belongs to the DapB family.</text>
</comment>
<comment type="caution">
    <text evidence="2">Was originally thought to be a dihydrodipicolinate reductase (DHDPR), catalyzing the conversion of dihydrodipicolinate to tetrahydrodipicolinate. However, it was shown in E.coli that the substrate of the enzymatic reaction is not dihydrodipicolinate (DHDP) but in fact (2S,4S)-4-hydroxy-2,3,4,5-tetrahydrodipicolinic acid (HTPA), the product released by the DapA-catalyzed reaction.</text>
</comment>
<accession>Q71YA8</accession>
<protein>
    <recommendedName>
        <fullName evidence="1">4-hydroxy-tetrahydrodipicolinate reductase</fullName>
        <shortName evidence="1">HTPA reductase</shortName>
        <ecNumber evidence="1">1.17.1.8</ecNumber>
    </recommendedName>
</protein>
<feature type="chain" id="PRO_0000141453" description="4-hydroxy-tetrahydrodipicolinate reductase">
    <location>
        <begin position="1"/>
        <end position="263"/>
    </location>
</feature>
<feature type="active site" description="Proton donor/acceptor" evidence="1">
    <location>
        <position position="152"/>
    </location>
</feature>
<feature type="active site" description="Proton donor" evidence="1">
    <location>
        <position position="156"/>
    </location>
</feature>
<feature type="binding site" evidence="1">
    <location>
        <begin position="7"/>
        <end position="12"/>
    </location>
    <ligand>
        <name>NAD(+)</name>
        <dbReference type="ChEBI" id="CHEBI:57540"/>
    </ligand>
</feature>
<feature type="binding site" evidence="1">
    <location>
        <begin position="96"/>
        <end position="98"/>
    </location>
    <ligand>
        <name>NAD(+)</name>
        <dbReference type="ChEBI" id="CHEBI:57540"/>
    </ligand>
</feature>
<feature type="binding site" evidence="1">
    <location>
        <begin position="122"/>
        <end position="125"/>
    </location>
    <ligand>
        <name>NAD(+)</name>
        <dbReference type="ChEBI" id="CHEBI:57540"/>
    </ligand>
</feature>
<feature type="binding site" evidence="1">
    <location>
        <position position="153"/>
    </location>
    <ligand>
        <name>(S)-2,3,4,5-tetrahydrodipicolinate</name>
        <dbReference type="ChEBI" id="CHEBI:16845"/>
    </ligand>
</feature>
<feature type="binding site" evidence="1">
    <location>
        <begin position="162"/>
        <end position="163"/>
    </location>
    <ligand>
        <name>(S)-2,3,4,5-tetrahydrodipicolinate</name>
        <dbReference type="ChEBI" id="CHEBI:16845"/>
    </ligand>
</feature>
<organism>
    <name type="scientific">Listeria monocytogenes serotype 4b (strain F2365)</name>
    <dbReference type="NCBI Taxonomy" id="265669"/>
    <lineage>
        <taxon>Bacteria</taxon>
        <taxon>Bacillati</taxon>
        <taxon>Bacillota</taxon>
        <taxon>Bacilli</taxon>
        <taxon>Bacillales</taxon>
        <taxon>Listeriaceae</taxon>
        <taxon>Listeria</taxon>
    </lineage>
</organism>
<proteinExistence type="inferred from homology"/>
<name>DAPB_LISMF</name>
<reference key="1">
    <citation type="journal article" date="2004" name="Nucleic Acids Res.">
        <title>Whole genome comparisons of serotype 4b and 1/2a strains of the food-borne pathogen Listeria monocytogenes reveal new insights into the core genome components of this species.</title>
        <authorList>
            <person name="Nelson K.E."/>
            <person name="Fouts D.E."/>
            <person name="Mongodin E.F."/>
            <person name="Ravel J."/>
            <person name="DeBoy R.T."/>
            <person name="Kolonay J.F."/>
            <person name="Rasko D.A."/>
            <person name="Angiuoli S.V."/>
            <person name="Gill S.R."/>
            <person name="Paulsen I.T."/>
            <person name="Peterson J.D."/>
            <person name="White O."/>
            <person name="Nelson W.C."/>
            <person name="Nierman W.C."/>
            <person name="Beanan M.J."/>
            <person name="Brinkac L.M."/>
            <person name="Daugherty S.C."/>
            <person name="Dodson R.J."/>
            <person name="Durkin A.S."/>
            <person name="Madupu R."/>
            <person name="Haft D.H."/>
            <person name="Selengut J."/>
            <person name="Van Aken S.E."/>
            <person name="Khouri H.M."/>
            <person name="Fedorova N."/>
            <person name="Forberger H.A."/>
            <person name="Tran B."/>
            <person name="Kathariou S."/>
            <person name="Wonderling L.D."/>
            <person name="Uhlich G.A."/>
            <person name="Bayles D.O."/>
            <person name="Luchansky J.B."/>
            <person name="Fraser C.M."/>
        </authorList>
    </citation>
    <scope>NUCLEOTIDE SEQUENCE [LARGE SCALE GENOMIC DNA]</scope>
    <source>
        <strain>F2365</strain>
    </source>
</reference>
<evidence type="ECO:0000255" key="1">
    <source>
        <dbReference type="HAMAP-Rule" id="MF_00102"/>
    </source>
</evidence>
<evidence type="ECO:0000305" key="2"/>
<keyword id="KW-0028">Amino-acid biosynthesis</keyword>
<keyword id="KW-0963">Cytoplasm</keyword>
<keyword id="KW-0220">Diaminopimelate biosynthesis</keyword>
<keyword id="KW-0457">Lysine biosynthesis</keyword>
<keyword id="KW-0520">NAD</keyword>
<keyword id="KW-0521">NADP</keyword>
<keyword id="KW-0560">Oxidoreductase</keyword>
<sequence length="263" mass="28882">MRVAVSGFKGRMGHEVVKTVLREADLELVAVLDHEPKEKNINEIVEFSSLDVPVFGNLSEMLEEIKPDCVVDFTTPKVGYSNTKTILEHGVRAVVGTTGFTPEQISELRSIAESKKIGALIAPNFAVGAVLMMQFAQKAAKYFPNVEIIELHHDNKLDAPSGTAVKTAEMMAETREFVKQGAADEVELIEGARGAEYEGMRIHSVRLPGLVAHQEVIFGAEGQGLTIRHDSYDRISFMSGVALSVRKTKELETLIYGLENILD</sequence>